<evidence type="ECO:0000255" key="1">
    <source>
        <dbReference type="HAMAP-Rule" id="MF_00735"/>
    </source>
</evidence>
<comment type="function">
    <text evidence="1">Methylates ribosomal protein L11.</text>
</comment>
<comment type="catalytic activity">
    <reaction evidence="1">
        <text>L-lysyl-[protein] + 3 S-adenosyl-L-methionine = N(6),N(6),N(6)-trimethyl-L-lysyl-[protein] + 3 S-adenosyl-L-homocysteine + 3 H(+)</text>
        <dbReference type="Rhea" id="RHEA:54192"/>
        <dbReference type="Rhea" id="RHEA-COMP:9752"/>
        <dbReference type="Rhea" id="RHEA-COMP:13826"/>
        <dbReference type="ChEBI" id="CHEBI:15378"/>
        <dbReference type="ChEBI" id="CHEBI:29969"/>
        <dbReference type="ChEBI" id="CHEBI:57856"/>
        <dbReference type="ChEBI" id="CHEBI:59789"/>
        <dbReference type="ChEBI" id="CHEBI:61961"/>
    </reaction>
</comment>
<comment type="subcellular location">
    <subcellularLocation>
        <location evidence="1">Cytoplasm</location>
    </subcellularLocation>
</comment>
<comment type="similarity">
    <text evidence="1">Belongs to the methyltransferase superfamily. PrmA family.</text>
</comment>
<dbReference type="EC" id="2.1.1.-" evidence="1"/>
<dbReference type="EMBL" id="CP001277">
    <property type="protein sequence ID" value="ACQ67539.1"/>
    <property type="molecule type" value="Genomic_DNA"/>
</dbReference>
<dbReference type="RefSeq" id="WP_015873358.1">
    <property type="nucleotide sequence ID" value="NC_012751.1"/>
</dbReference>
<dbReference type="SMR" id="C4K4P6"/>
<dbReference type="STRING" id="572265.HDEF_0817"/>
<dbReference type="GeneID" id="66260653"/>
<dbReference type="KEGG" id="hde:HDEF_0817"/>
<dbReference type="eggNOG" id="COG2264">
    <property type="taxonomic scope" value="Bacteria"/>
</dbReference>
<dbReference type="HOGENOM" id="CLU_049382_4_1_6"/>
<dbReference type="Proteomes" id="UP000002334">
    <property type="component" value="Chromosome"/>
</dbReference>
<dbReference type="GO" id="GO:0005829">
    <property type="term" value="C:cytosol"/>
    <property type="evidence" value="ECO:0007669"/>
    <property type="project" value="TreeGrafter"/>
</dbReference>
<dbReference type="GO" id="GO:0016279">
    <property type="term" value="F:protein-lysine N-methyltransferase activity"/>
    <property type="evidence" value="ECO:0007669"/>
    <property type="project" value="TreeGrafter"/>
</dbReference>
<dbReference type="GO" id="GO:0032259">
    <property type="term" value="P:methylation"/>
    <property type="evidence" value="ECO:0007669"/>
    <property type="project" value="UniProtKB-KW"/>
</dbReference>
<dbReference type="CDD" id="cd02440">
    <property type="entry name" value="AdoMet_MTases"/>
    <property type="match status" value="1"/>
</dbReference>
<dbReference type="Gene3D" id="3.40.50.150">
    <property type="entry name" value="Vaccinia Virus protein VP39"/>
    <property type="match status" value="1"/>
</dbReference>
<dbReference type="HAMAP" id="MF_00735">
    <property type="entry name" value="Methyltr_PrmA"/>
    <property type="match status" value="1"/>
</dbReference>
<dbReference type="InterPro" id="IPR050078">
    <property type="entry name" value="Ribosomal_L11_MeTrfase_PrmA"/>
</dbReference>
<dbReference type="InterPro" id="IPR004498">
    <property type="entry name" value="Ribosomal_PrmA_MeTrfase"/>
</dbReference>
<dbReference type="InterPro" id="IPR029063">
    <property type="entry name" value="SAM-dependent_MTases_sf"/>
</dbReference>
<dbReference type="NCBIfam" id="TIGR00406">
    <property type="entry name" value="prmA"/>
    <property type="match status" value="1"/>
</dbReference>
<dbReference type="PANTHER" id="PTHR43648">
    <property type="entry name" value="ELECTRON TRANSFER FLAVOPROTEIN BETA SUBUNIT LYSINE METHYLTRANSFERASE"/>
    <property type="match status" value="1"/>
</dbReference>
<dbReference type="PANTHER" id="PTHR43648:SF1">
    <property type="entry name" value="ELECTRON TRANSFER FLAVOPROTEIN BETA SUBUNIT LYSINE METHYLTRANSFERASE"/>
    <property type="match status" value="1"/>
</dbReference>
<dbReference type="Pfam" id="PF06325">
    <property type="entry name" value="PrmA"/>
    <property type="match status" value="1"/>
</dbReference>
<dbReference type="PIRSF" id="PIRSF000401">
    <property type="entry name" value="RPL11_MTase"/>
    <property type="match status" value="1"/>
</dbReference>
<dbReference type="SUPFAM" id="SSF53335">
    <property type="entry name" value="S-adenosyl-L-methionine-dependent methyltransferases"/>
    <property type="match status" value="1"/>
</dbReference>
<proteinExistence type="inferred from homology"/>
<organism>
    <name type="scientific">Hamiltonella defensa subsp. Acyrthosiphon pisum (strain 5AT)</name>
    <dbReference type="NCBI Taxonomy" id="572265"/>
    <lineage>
        <taxon>Bacteria</taxon>
        <taxon>Pseudomonadati</taxon>
        <taxon>Pseudomonadota</taxon>
        <taxon>Gammaproteobacteria</taxon>
        <taxon>Enterobacterales</taxon>
        <taxon>Enterobacteriaceae</taxon>
        <taxon>aphid secondary symbionts</taxon>
        <taxon>Candidatus Hamiltonella</taxon>
    </lineage>
</organism>
<accession>C4K4P6</accession>
<sequence length="305" mass="33709">MPWIQIKIITSKQHDNLLETLLLETGAVSVTFQDAGDQPIFEPLPGELKFWDDIEIAGLYEADNNLHEHQTKIAAAINKIKAMCEPGQHFIYKIEHLEDKQWEREWMIHFHPMRFGQRLWVCPSMQAVPDPSAVNVILDPGLAFGTGTHPTTALCLEWLDSLDLQNKILIDFGCGSGILAIAALKLGAKQAIGIDIDPQAIEASRDNAQRNGVSEHLVLYLSGQEPKNLQADVVVANILAAPLCELAGVIADLVKPDGYLGLSGILNTQSDKVSQAYQHAFCLYPIAEKEEWCRITAVKNKNDGI</sequence>
<protein>
    <recommendedName>
        <fullName evidence="1">Ribosomal protein L11 methyltransferase</fullName>
        <shortName evidence="1">L11 Mtase</shortName>
        <ecNumber evidence="1">2.1.1.-</ecNumber>
    </recommendedName>
</protein>
<reference key="1">
    <citation type="journal article" date="2009" name="Proc. Natl. Acad. Sci. U.S.A.">
        <title>Hamiltonella defensa, genome evolution of protective bacterial endosymbiont from pathogenic ancestors.</title>
        <authorList>
            <person name="Degnan P.H."/>
            <person name="Yu Y."/>
            <person name="Sisneros N."/>
            <person name="Wing R.A."/>
            <person name="Moran N.A."/>
        </authorList>
    </citation>
    <scope>NUCLEOTIDE SEQUENCE [LARGE SCALE GENOMIC DNA]</scope>
    <source>
        <strain>5AT</strain>
    </source>
</reference>
<name>PRMA_HAMD5</name>
<feature type="chain" id="PRO_1000212752" description="Ribosomal protein L11 methyltransferase">
    <location>
        <begin position="1"/>
        <end position="305"/>
    </location>
</feature>
<feature type="binding site" evidence="1">
    <location>
        <position position="152"/>
    </location>
    <ligand>
        <name>S-adenosyl-L-methionine</name>
        <dbReference type="ChEBI" id="CHEBI:59789"/>
    </ligand>
</feature>
<feature type="binding site" evidence="1">
    <location>
        <position position="173"/>
    </location>
    <ligand>
        <name>S-adenosyl-L-methionine</name>
        <dbReference type="ChEBI" id="CHEBI:59789"/>
    </ligand>
</feature>
<feature type="binding site" evidence="1">
    <location>
        <position position="195"/>
    </location>
    <ligand>
        <name>S-adenosyl-L-methionine</name>
        <dbReference type="ChEBI" id="CHEBI:59789"/>
    </ligand>
</feature>
<feature type="binding site" evidence="1">
    <location>
        <position position="237"/>
    </location>
    <ligand>
        <name>S-adenosyl-L-methionine</name>
        <dbReference type="ChEBI" id="CHEBI:59789"/>
    </ligand>
</feature>
<keyword id="KW-0963">Cytoplasm</keyword>
<keyword id="KW-0489">Methyltransferase</keyword>
<keyword id="KW-0949">S-adenosyl-L-methionine</keyword>
<keyword id="KW-0808">Transferase</keyword>
<gene>
    <name evidence="1" type="primary">prmA</name>
    <name type="ordered locus">HDEF_0817</name>
</gene>